<proteinExistence type="evidence at transcript level"/>
<feature type="chain" id="PRO_0000269669" description="Glutaredoxin-C8">
    <location>
        <begin position="1"/>
        <end position="136"/>
    </location>
</feature>
<feature type="domain" description="Glutaredoxin" evidence="2">
    <location>
        <begin position="33"/>
        <end position="135"/>
    </location>
</feature>
<feature type="disulfide bond" description="Redox-active" evidence="1">
    <location>
        <begin position="53"/>
        <end position="56"/>
    </location>
</feature>
<dbReference type="EMBL" id="AP005760">
    <property type="protein sequence ID" value="BAD38347.1"/>
    <property type="molecule type" value="Genomic_DNA"/>
</dbReference>
<dbReference type="EMBL" id="AP005769">
    <property type="protein sequence ID" value="BAD46403.1"/>
    <property type="molecule type" value="Genomic_DNA"/>
</dbReference>
<dbReference type="EMBL" id="AP008212">
    <property type="protein sequence ID" value="BAF20179.1"/>
    <property type="status" value="ALT_SEQ"/>
    <property type="molecule type" value="Genomic_DNA"/>
</dbReference>
<dbReference type="EMBL" id="AP014962">
    <property type="status" value="NOT_ANNOTATED_CDS"/>
    <property type="molecule type" value="Genomic_DNA"/>
</dbReference>
<dbReference type="EMBL" id="AK058431">
    <property type="status" value="NOT_ANNOTATED_CDS"/>
    <property type="molecule type" value="mRNA"/>
</dbReference>
<dbReference type="RefSeq" id="XP_015641379.1">
    <property type="nucleotide sequence ID" value="XM_015785893.1"/>
</dbReference>
<dbReference type="SMR" id="Q0DAE4"/>
<dbReference type="FunCoup" id="Q0DAE4">
    <property type="interactions" value="2033"/>
</dbReference>
<dbReference type="STRING" id="39947.Q0DAE4"/>
<dbReference type="PaxDb" id="39947-Q0DAE4"/>
<dbReference type="KEGG" id="dosa:Os06g0659500"/>
<dbReference type="eggNOG" id="KOG1752">
    <property type="taxonomic scope" value="Eukaryota"/>
</dbReference>
<dbReference type="HOGENOM" id="CLU_026126_7_4_1"/>
<dbReference type="InParanoid" id="Q0DAE4"/>
<dbReference type="OrthoDB" id="418495at2759"/>
<dbReference type="Proteomes" id="UP000000763">
    <property type="component" value="Chromosome 6"/>
</dbReference>
<dbReference type="Proteomes" id="UP000059680">
    <property type="component" value="Chromosome 6"/>
</dbReference>
<dbReference type="GO" id="GO:0005737">
    <property type="term" value="C:cytoplasm"/>
    <property type="evidence" value="ECO:0000318"/>
    <property type="project" value="GO_Central"/>
</dbReference>
<dbReference type="GO" id="GO:0015038">
    <property type="term" value="F:glutathione disulfide oxidoreductase activity"/>
    <property type="evidence" value="ECO:0000318"/>
    <property type="project" value="GO_Central"/>
</dbReference>
<dbReference type="GO" id="GO:0034599">
    <property type="term" value="P:cellular response to oxidative stress"/>
    <property type="evidence" value="ECO:0000318"/>
    <property type="project" value="GO_Central"/>
</dbReference>
<dbReference type="CDD" id="cd03419">
    <property type="entry name" value="GRX_GRXh_1_2_like"/>
    <property type="match status" value="1"/>
</dbReference>
<dbReference type="FunFam" id="3.40.30.10:FF:000026">
    <property type="entry name" value="Glutaredoxin 2"/>
    <property type="match status" value="1"/>
</dbReference>
<dbReference type="Gene3D" id="3.40.30.10">
    <property type="entry name" value="Glutaredoxin"/>
    <property type="match status" value="1"/>
</dbReference>
<dbReference type="InterPro" id="IPR011767">
    <property type="entry name" value="GLR_AS"/>
</dbReference>
<dbReference type="InterPro" id="IPR002109">
    <property type="entry name" value="Glutaredoxin"/>
</dbReference>
<dbReference type="InterPro" id="IPR011899">
    <property type="entry name" value="Glutaredoxin_euk/vir"/>
</dbReference>
<dbReference type="InterPro" id="IPR014025">
    <property type="entry name" value="Glutaredoxin_subgr"/>
</dbReference>
<dbReference type="InterPro" id="IPR036249">
    <property type="entry name" value="Thioredoxin-like_sf"/>
</dbReference>
<dbReference type="NCBIfam" id="TIGR02180">
    <property type="entry name" value="GRX_euk"/>
    <property type="match status" value="1"/>
</dbReference>
<dbReference type="PANTHER" id="PTHR45694">
    <property type="entry name" value="GLUTAREDOXIN 2"/>
    <property type="match status" value="1"/>
</dbReference>
<dbReference type="PANTHER" id="PTHR45694:SF5">
    <property type="entry name" value="GLUTAREDOXIN 2"/>
    <property type="match status" value="1"/>
</dbReference>
<dbReference type="Pfam" id="PF00462">
    <property type="entry name" value="Glutaredoxin"/>
    <property type="match status" value="1"/>
</dbReference>
<dbReference type="PRINTS" id="PR00160">
    <property type="entry name" value="GLUTAREDOXIN"/>
</dbReference>
<dbReference type="SUPFAM" id="SSF52833">
    <property type="entry name" value="Thioredoxin-like"/>
    <property type="match status" value="1"/>
</dbReference>
<dbReference type="PROSITE" id="PS00195">
    <property type="entry name" value="GLUTAREDOXIN_1"/>
    <property type="match status" value="1"/>
</dbReference>
<dbReference type="PROSITE" id="PS51354">
    <property type="entry name" value="GLUTAREDOXIN_2"/>
    <property type="match status" value="1"/>
</dbReference>
<evidence type="ECO:0000250" key="1"/>
<evidence type="ECO:0000255" key="2">
    <source>
        <dbReference type="PROSITE-ProRule" id="PRU00686"/>
    </source>
</evidence>
<evidence type="ECO:0000305" key="3"/>
<protein>
    <recommendedName>
        <fullName>Glutaredoxin-C8</fullName>
    </recommendedName>
    <alternativeName>
        <fullName>Glutaredoxin-C4 homolog</fullName>
    </alternativeName>
</protein>
<gene>
    <name type="primary">GRXC8</name>
    <name type="ordered locus">Os06g0659500</name>
    <name type="ordered locus">LOC_Os06g44910</name>
    <name type="ORF">B1047G05.35</name>
    <name type="ORF">OSJNBa0051O02.7</name>
</gene>
<reference key="1">
    <citation type="journal article" date="2005" name="Nature">
        <title>The map-based sequence of the rice genome.</title>
        <authorList>
            <consortium name="International rice genome sequencing project (IRGSP)"/>
        </authorList>
    </citation>
    <scope>NUCLEOTIDE SEQUENCE [LARGE SCALE GENOMIC DNA]</scope>
    <source>
        <strain>cv. Nipponbare</strain>
    </source>
</reference>
<reference key="2">
    <citation type="journal article" date="2008" name="Nucleic Acids Res.">
        <title>The rice annotation project database (RAP-DB): 2008 update.</title>
        <authorList>
            <consortium name="The rice annotation project (RAP)"/>
        </authorList>
    </citation>
    <scope>GENOME REANNOTATION</scope>
    <source>
        <strain>cv. Nipponbare</strain>
    </source>
</reference>
<reference key="3">
    <citation type="journal article" date="2013" name="Rice">
        <title>Improvement of the Oryza sativa Nipponbare reference genome using next generation sequence and optical map data.</title>
        <authorList>
            <person name="Kawahara Y."/>
            <person name="de la Bastide M."/>
            <person name="Hamilton J.P."/>
            <person name="Kanamori H."/>
            <person name="McCombie W.R."/>
            <person name="Ouyang S."/>
            <person name="Schwartz D.C."/>
            <person name="Tanaka T."/>
            <person name="Wu J."/>
            <person name="Zhou S."/>
            <person name="Childs K.L."/>
            <person name="Davidson R.M."/>
            <person name="Lin H."/>
            <person name="Quesada-Ocampo L."/>
            <person name="Vaillancourt B."/>
            <person name="Sakai H."/>
            <person name="Lee S.S."/>
            <person name="Kim J."/>
            <person name="Numa H."/>
            <person name="Itoh T."/>
            <person name="Buell C.R."/>
            <person name="Matsumoto T."/>
        </authorList>
    </citation>
    <scope>GENOME REANNOTATION</scope>
    <source>
        <strain>cv. Nipponbare</strain>
    </source>
</reference>
<reference key="4">
    <citation type="journal article" date="2003" name="Science">
        <title>Collection, mapping, and annotation of over 28,000 cDNA clones from japonica rice.</title>
        <authorList>
            <consortium name="The rice full-length cDNA consortium"/>
        </authorList>
    </citation>
    <scope>NUCLEOTIDE SEQUENCE [LARGE SCALE MRNA] OF 60-136</scope>
    <source>
        <strain>cv. Nipponbare</strain>
    </source>
</reference>
<reference key="5">
    <citation type="journal article" date="2006" name="J. Exp. Bot.">
        <title>Genome-wide analysis of plant glutaredoxin systems.</title>
        <authorList>
            <person name="Rouhier N."/>
            <person name="Couturier J."/>
            <person name="Jacquot J.-P."/>
        </authorList>
    </citation>
    <scope>GENE FAMILY</scope>
</reference>
<accession>Q0DAE4</accession>
<accession>Q67U24</accession>
<comment type="function">
    <text evidence="1">Has a glutathione-disulfide oxidoreductase activity in the presence of NADPH and glutathione reductase. Reduces low molecular weight disulfides and proteins (By similarity).</text>
</comment>
<comment type="subcellular location">
    <subcellularLocation>
        <location evidence="1">Cytoplasm</location>
    </subcellularLocation>
</comment>
<comment type="similarity">
    <text evidence="3">Belongs to the glutaredoxin family. CPYC subfamily.</text>
</comment>
<comment type="sequence caution" evidence="3">
    <conflict type="erroneous gene model prediction">
        <sequence resource="EMBL-CDS" id="BAF20179"/>
    </conflict>
</comment>
<name>GRXC8_ORYSJ</name>
<sequence length="136" mass="14761">MAALLGRRFGMAAAALIALAALGSAASGTASKSSFVKSTVKAHDVVIFSKSYCPYCRRAKAVFKELELKKEPYVVELDQREDGWEIQDALSDMVGRRTVPQVFVHGKHLGGSDDTVEAYESGKLAKLLNIDVKEDL</sequence>
<keyword id="KW-0963">Cytoplasm</keyword>
<keyword id="KW-1015">Disulfide bond</keyword>
<keyword id="KW-0249">Electron transport</keyword>
<keyword id="KW-0676">Redox-active center</keyword>
<keyword id="KW-1185">Reference proteome</keyword>
<keyword id="KW-0813">Transport</keyword>
<organism>
    <name type="scientific">Oryza sativa subsp. japonica</name>
    <name type="common">Rice</name>
    <dbReference type="NCBI Taxonomy" id="39947"/>
    <lineage>
        <taxon>Eukaryota</taxon>
        <taxon>Viridiplantae</taxon>
        <taxon>Streptophyta</taxon>
        <taxon>Embryophyta</taxon>
        <taxon>Tracheophyta</taxon>
        <taxon>Spermatophyta</taxon>
        <taxon>Magnoliopsida</taxon>
        <taxon>Liliopsida</taxon>
        <taxon>Poales</taxon>
        <taxon>Poaceae</taxon>
        <taxon>BOP clade</taxon>
        <taxon>Oryzoideae</taxon>
        <taxon>Oryzeae</taxon>
        <taxon>Oryzinae</taxon>
        <taxon>Oryza</taxon>
        <taxon>Oryza sativa</taxon>
    </lineage>
</organism>